<organism>
    <name type="scientific">Mus musculus</name>
    <name type="common">Mouse</name>
    <dbReference type="NCBI Taxonomy" id="10090"/>
    <lineage>
        <taxon>Eukaryota</taxon>
        <taxon>Metazoa</taxon>
        <taxon>Chordata</taxon>
        <taxon>Craniata</taxon>
        <taxon>Vertebrata</taxon>
        <taxon>Euteleostomi</taxon>
        <taxon>Mammalia</taxon>
        <taxon>Eutheria</taxon>
        <taxon>Euarchontoglires</taxon>
        <taxon>Glires</taxon>
        <taxon>Rodentia</taxon>
        <taxon>Myomorpha</taxon>
        <taxon>Muroidea</taxon>
        <taxon>Muridae</taxon>
        <taxon>Murinae</taxon>
        <taxon>Mus</taxon>
        <taxon>Mus</taxon>
    </lineage>
</organism>
<protein>
    <recommendedName>
        <fullName evidence="23">Transcription intermediary factor 1-beta</fullName>
        <shortName>TIF1-beta</shortName>
    </recommendedName>
    <alternativeName>
        <fullName>E3 SUMO-protein ligase TRIM28</fullName>
        <ecNumber>2.3.2.27</ecNumber>
    </alternativeName>
    <alternativeName>
        <fullName>KRAB-A-interacting protein</fullName>
    </alternativeName>
    <alternativeName>
        <fullName>KRIP-1</fullName>
    </alternativeName>
    <alternativeName>
        <fullName evidence="23">RING-type E3 ubiquitin transferase TIF1-beta</fullName>
    </alternativeName>
    <alternativeName>
        <fullName>Tripartite motif-containing protein 28</fullName>
    </alternativeName>
</protein>
<reference key="1">
    <citation type="journal article" date="1996" name="EMBO J.">
        <title>A possible involvement of TIF1 alpha and TIF1 beta in the epigenetic control of transcription by nuclear receptors.</title>
        <authorList>
            <person name="le Douarin B."/>
            <person name="Nielsen A.L."/>
            <person name="Garnier J.-M."/>
            <person name="Ichinose H."/>
            <person name="Jeanmougin F."/>
            <person name="Losson R."/>
            <person name="Chambon P."/>
        </authorList>
    </citation>
    <scope>NUCLEOTIDE SEQUENCE [MRNA] (ISOFORM 1)</scope>
</reference>
<reference key="2">
    <citation type="journal article" date="1996" name="Proc. Natl. Acad. Sci. U.S.A.">
        <title>A novel member of the RING finger family, KRIP-1, associates with the KRAB-A transcriptional repressor domain of zinc finger proteins.</title>
        <authorList>
            <person name="Kim S.-S."/>
            <person name="Chen Y.-M."/>
            <person name="O'Leary E."/>
            <person name="Witzgall R."/>
            <person name="Vidal M."/>
            <person name="Bonventre J.V."/>
        </authorList>
    </citation>
    <scope>NUCLEOTIDE SEQUENCE [MRNA] (ISOFORM 1)</scope>
    <source>
        <tissue>Kidney</tissue>
    </source>
</reference>
<reference key="3">
    <citation type="journal article" date="2000" name="Gene">
        <title>Correlation of the exon/intron organization to the conserved domains of the mouse transcriptional corepressor TIF1beta.</title>
        <authorList>
            <person name="Cammas F."/>
            <person name="Garnier J.-M."/>
            <person name="Chambon P."/>
            <person name="Losson R."/>
        </authorList>
    </citation>
    <scope>NUCLEOTIDE SEQUENCE [GENOMIC DNA] (ISOFORM 1)</scope>
</reference>
<reference key="4">
    <citation type="journal article" date="2001" name="EMBO J.">
        <title>The tripartite motif family identifies cell compartments.</title>
        <authorList>
            <person name="Reymond A."/>
            <person name="Meroni G."/>
            <person name="Fantozzi A."/>
            <person name="Merla G."/>
            <person name="Cairo S."/>
            <person name="Luzi L."/>
            <person name="Riganelli D."/>
            <person name="Zanaria E."/>
            <person name="Messali S."/>
            <person name="Cainarca S."/>
            <person name="Guffanti A."/>
            <person name="Minucci S."/>
            <person name="Pelicci P.G."/>
            <person name="Ballabio A."/>
        </authorList>
    </citation>
    <scope>NUCLEOTIDE SEQUENCE (ISOFORMS 1 AND 2)</scope>
</reference>
<reference key="5">
    <citation type="journal article" date="2004" name="Genome Res.">
        <title>The status, quality, and expansion of the NIH full-length cDNA project: the Mammalian Gene Collection (MGC).</title>
        <authorList>
            <consortium name="The MGC Project Team"/>
        </authorList>
    </citation>
    <scope>NUCLEOTIDE SEQUENCE [LARGE SCALE MRNA] (ISOFORM 1)</scope>
    <source>
        <strain>C57BL/6J</strain>
        <tissue>Brain</tissue>
    </source>
</reference>
<reference key="6">
    <citation type="journal article" date="2005" name="Science">
        <title>The transcriptional landscape of the mammalian genome.</title>
        <authorList>
            <person name="Carninci P."/>
            <person name="Kasukawa T."/>
            <person name="Katayama S."/>
            <person name="Gough J."/>
            <person name="Frith M.C."/>
            <person name="Maeda N."/>
            <person name="Oyama R."/>
            <person name="Ravasi T."/>
            <person name="Lenhard B."/>
            <person name="Wells C."/>
            <person name="Kodzius R."/>
            <person name="Shimokawa K."/>
            <person name="Bajic V.B."/>
            <person name="Brenner S.E."/>
            <person name="Batalov S."/>
            <person name="Forrest A.R."/>
            <person name="Zavolan M."/>
            <person name="Davis M.J."/>
            <person name="Wilming L.G."/>
            <person name="Aidinis V."/>
            <person name="Allen J.E."/>
            <person name="Ambesi-Impiombato A."/>
            <person name="Apweiler R."/>
            <person name="Aturaliya R.N."/>
            <person name="Bailey T.L."/>
            <person name="Bansal M."/>
            <person name="Baxter L."/>
            <person name="Beisel K.W."/>
            <person name="Bersano T."/>
            <person name="Bono H."/>
            <person name="Chalk A.M."/>
            <person name="Chiu K.P."/>
            <person name="Choudhary V."/>
            <person name="Christoffels A."/>
            <person name="Clutterbuck D.R."/>
            <person name="Crowe M.L."/>
            <person name="Dalla E."/>
            <person name="Dalrymple B.P."/>
            <person name="de Bono B."/>
            <person name="Della Gatta G."/>
            <person name="di Bernardo D."/>
            <person name="Down T."/>
            <person name="Engstrom P."/>
            <person name="Fagiolini M."/>
            <person name="Faulkner G."/>
            <person name="Fletcher C.F."/>
            <person name="Fukushima T."/>
            <person name="Furuno M."/>
            <person name="Futaki S."/>
            <person name="Gariboldi M."/>
            <person name="Georgii-Hemming P."/>
            <person name="Gingeras T.R."/>
            <person name="Gojobori T."/>
            <person name="Green R.E."/>
            <person name="Gustincich S."/>
            <person name="Harbers M."/>
            <person name="Hayashi Y."/>
            <person name="Hensch T.K."/>
            <person name="Hirokawa N."/>
            <person name="Hill D."/>
            <person name="Huminiecki L."/>
            <person name="Iacono M."/>
            <person name="Ikeo K."/>
            <person name="Iwama A."/>
            <person name="Ishikawa T."/>
            <person name="Jakt M."/>
            <person name="Kanapin A."/>
            <person name="Katoh M."/>
            <person name="Kawasawa Y."/>
            <person name="Kelso J."/>
            <person name="Kitamura H."/>
            <person name="Kitano H."/>
            <person name="Kollias G."/>
            <person name="Krishnan S.P."/>
            <person name="Kruger A."/>
            <person name="Kummerfeld S.K."/>
            <person name="Kurochkin I.V."/>
            <person name="Lareau L.F."/>
            <person name="Lazarevic D."/>
            <person name="Lipovich L."/>
            <person name="Liu J."/>
            <person name="Liuni S."/>
            <person name="McWilliam S."/>
            <person name="Madan Babu M."/>
            <person name="Madera M."/>
            <person name="Marchionni L."/>
            <person name="Matsuda H."/>
            <person name="Matsuzawa S."/>
            <person name="Miki H."/>
            <person name="Mignone F."/>
            <person name="Miyake S."/>
            <person name="Morris K."/>
            <person name="Mottagui-Tabar S."/>
            <person name="Mulder N."/>
            <person name="Nakano N."/>
            <person name="Nakauchi H."/>
            <person name="Ng P."/>
            <person name="Nilsson R."/>
            <person name="Nishiguchi S."/>
            <person name="Nishikawa S."/>
            <person name="Nori F."/>
            <person name="Ohara O."/>
            <person name="Okazaki Y."/>
            <person name="Orlando V."/>
            <person name="Pang K.C."/>
            <person name="Pavan W.J."/>
            <person name="Pavesi G."/>
            <person name="Pesole G."/>
            <person name="Petrovsky N."/>
            <person name="Piazza S."/>
            <person name="Reed J."/>
            <person name="Reid J.F."/>
            <person name="Ring B.Z."/>
            <person name="Ringwald M."/>
            <person name="Rost B."/>
            <person name="Ruan Y."/>
            <person name="Salzberg S.L."/>
            <person name="Sandelin A."/>
            <person name="Schneider C."/>
            <person name="Schoenbach C."/>
            <person name="Sekiguchi K."/>
            <person name="Semple C.A."/>
            <person name="Seno S."/>
            <person name="Sessa L."/>
            <person name="Sheng Y."/>
            <person name="Shibata Y."/>
            <person name="Shimada H."/>
            <person name="Shimada K."/>
            <person name="Silva D."/>
            <person name="Sinclair B."/>
            <person name="Sperling S."/>
            <person name="Stupka E."/>
            <person name="Sugiura K."/>
            <person name="Sultana R."/>
            <person name="Takenaka Y."/>
            <person name="Taki K."/>
            <person name="Tammoja K."/>
            <person name="Tan S.L."/>
            <person name="Tang S."/>
            <person name="Taylor M.S."/>
            <person name="Tegner J."/>
            <person name="Teichmann S.A."/>
            <person name="Ueda H.R."/>
            <person name="van Nimwegen E."/>
            <person name="Verardo R."/>
            <person name="Wei C.L."/>
            <person name="Yagi K."/>
            <person name="Yamanishi H."/>
            <person name="Zabarovsky E."/>
            <person name="Zhu S."/>
            <person name="Zimmer A."/>
            <person name="Hide W."/>
            <person name="Bult C."/>
            <person name="Grimmond S.M."/>
            <person name="Teasdale R.D."/>
            <person name="Liu E.T."/>
            <person name="Brusic V."/>
            <person name="Quackenbush J."/>
            <person name="Wahlestedt C."/>
            <person name="Mattick J.S."/>
            <person name="Hume D.A."/>
            <person name="Kai C."/>
            <person name="Sasaki D."/>
            <person name="Tomaru Y."/>
            <person name="Fukuda S."/>
            <person name="Kanamori-Katayama M."/>
            <person name="Suzuki M."/>
            <person name="Aoki J."/>
            <person name="Arakawa T."/>
            <person name="Iida J."/>
            <person name="Imamura K."/>
            <person name="Itoh M."/>
            <person name="Kato T."/>
            <person name="Kawaji H."/>
            <person name="Kawagashira N."/>
            <person name="Kawashima T."/>
            <person name="Kojima M."/>
            <person name="Kondo S."/>
            <person name="Konno H."/>
            <person name="Nakano K."/>
            <person name="Ninomiya N."/>
            <person name="Nishio T."/>
            <person name="Okada M."/>
            <person name="Plessy C."/>
            <person name="Shibata K."/>
            <person name="Shiraki T."/>
            <person name="Suzuki S."/>
            <person name="Tagami M."/>
            <person name="Waki K."/>
            <person name="Watahiki A."/>
            <person name="Okamura-Oho Y."/>
            <person name="Suzuki H."/>
            <person name="Kawai J."/>
            <person name="Hayashizaki Y."/>
        </authorList>
    </citation>
    <scope>NUCLEOTIDE SEQUENCE [LARGE SCALE MRNA] OF 595-834 (ISOFORM 1)</scope>
    <source>
        <strain>NOD</strain>
        <tissue>Thymus</tissue>
    </source>
</reference>
<reference key="7">
    <citation type="journal article" date="1998" name="Mol. Cell. Biol.">
        <title>Coactivator TIF1beta interacts with transcription factor C/EBPbeta and glucocorticoid receptor to induce alpha1-acid glycoprotein gene expression.</title>
        <authorList>
            <person name="Chang C.J."/>
            <person name="Chen Y.L."/>
            <person name="Lee S.C."/>
        </authorList>
    </citation>
    <scope>INTERACTION WITH CEBPB AND NR3C1</scope>
    <scope>FUNCTION</scope>
</reference>
<reference key="8">
    <citation type="journal article" date="1999" name="EMBO J.">
        <title>Interaction with members of the heterochromatin protein 1 (HP1) family and histone deacetylation are differentially involved in transcriptional silencing by members of the TIF1 family.</title>
        <authorList>
            <person name="Nielsen A.L."/>
            <person name="Ortiz J.A."/>
            <person name="You J."/>
            <person name="Oulad-Abdelghani M."/>
            <person name="Khechumian R."/>
            <person name="Gansmuller A."/>
            <person name="Chambon P."/>
            <person name="Losson R."/>
        </authorList>
    </citation>
    <scope>INTERACTION WITH CBX1; CBX3 AND CBX5</scope>
</reference>
<reference key="9">
    <citation type="journal article" date="1999" name="Mol. Cell. Biol.">
        <title>KAP-1 corepressor protein interacts and colocalizes with heterochromatic and euchromatic HP1 proteins: a potential role for Kruppel-associated box-zinc finger proteins in heterochromatin-mediated gene silencing.</title>
        <authorList>
            <person name="Ryan R.F."/>
            <person name="Schultz D.C."/>
            <person name="Ayyanathan K."/>
            <person name="Singh P.B."/>
            <person name="Friedman J.R."/>
            <person name="Fredericks W.J."/>
            <person name="Rauscher F.J. III"/>
        </authorList>
    </citation>
    <scope>SUBCELLULAR LOCATION</scope>
    <scope>INTERACTION WITH CBX1; CBX3 AND CBX5</scope>
</reference>
<reference key="10">
    <citation type="journal article" date="2001" name="Mol. Cell. Biol.">
        <title>Sequence-specific transcriptional repression by KS1, a multiple-zinc-finger-Kruppel-associated box protein.</title>
        <authorList>
            <person name="Gebelein B."/>
            <person name="Urrutia R."/>
        </authorList>
    </citation>
    <scope>INTERACTION WITH ZNF382</scope>
    <scope>SUBCELLULAR LOCATION</scope>
</reference>
<reference key="11">
    <citation type="journal article" date="2002" name="J. Cell Sci.">
        <title>Cell differentiation induces TIF1beta association with centromeric heterochromatin via an HP1 interaction.</title>
        <authorList>
            <person name="Cammas F."/>
            <person name="Oulad-Abdelghani M."/>
            <person name="Vonesch J.-L."/>
            <person name="Huss-Garcia Y."/>
            <person name="Chambon P."/>
            <person name="Losson R."/>
        </authorList>
    </citation>
    <scope>SUBCELLULAR LOCATION</scope>
</reference>
<reference key="12">
    <citation type="journal article" date="2004" name="Mol. Cell. Proteomics">
        <title>Phosphoproteomic analysis of the developing mouse brain.</title>
        <authorList>
            <person name="Ballif B.A."/>
            <person name="Villen J."/>
            <person name="Beausoleil S.A."/>
            <person name="Schwartz D."/>
            <person name="Gygi S.P."/>
        </authorList>
    </citation>
    <scope>PHOSPHORYLATION [LARGE SCALE ANALYSIS] AT SER-473</scope>
    <scope>IDENTIFICATION BY MASS SPECTROMETRY [LARGE SCALE ANALYSIS]</scope>
    <source>
        <tissue>Embryonic brain</tissue>
    </source>
</reference>
<reference key="13">
    <citation type="journal article" date="2006" name="Mol. Cell. Proteomics">
        <title>Comprehensive identification of phosphorylation sites in postsynaptic density preparations.</title>
        <authorList>
            <person name="Trinidad J.C."/>
            <person name="Specht C.G."/>
            <person name="Thalhammer A."/>
            <person name="Schoepfer R."/>
            <person name="Burlingame A.L."/>
        </authorList>
    </citation>
    <scope>IDENTIFICATION BY MASS SPECTROMETRY [LARGE SCALE ANALYSIS]</scope>
    <source>
        <tissue>Brain</tissue>
    </source>
</reference>
<reference key="14">
    <citation type="journal article" date="2007" name="Proc. Natl. Acad. Sci. U.S.A.">
        <title>Large-scale phosphorylation analysis of mouse liver.</title>
        <authorList>
            <person name="Villen J."/>
            <person name="Beausoleil S.A."/>
            <person name="Gerber S.A."/>
            <person name="Gygi S.P."/>
        </authorList>
    </citation>
    <scope>ACETYLATION [LARGE SCALE ANALYSIS] AT ALA-2</scope>
    <scope>PHOSPHORYLATION [LARGE SCALE ANALYSIS] AT SER-473</scope>
    <scope>CLEAVAGE OF INITIATOR METHIONINE [LARGE SCALE ANALYSIS]</scope>
    <scope>IDENTIFICATION BY MASS SPECTROMETRY [LARGE SCALE ANALYSIS]</scope>
    <source>
        <tissue>Liver</tissue>
    </source>
</reference>
<reference key="15">
    <citation type="journal article" date="2009" name="Immunity">
        <title>The phagosomal proteome in interferon-gamma-activated macrophages.</title>
        <authorList>
            <person name="Trost M."/>
            <person name="English L."/>
            <person name="Lemieux S."/>
            <person name="Courcelles M."/>
            <person name="Desjardins M."/>
            <person name="Thibault P."/>
        </authorList>
    </citation>
    <scope>PHOSPHORYLATION [LARGE SCALE ANALYSIS] AT SER-473</scope>
    <scope>IDENTIFICATION BY MASS SPECTROMETRY [LARGE SCALE ANALYSIS]</scope>
</reference>
<reference key="16">
    <citation type="journal article" date="2009" name="J. Biol. Chem.">
        <title>TIF1beta/KAP-1 is a coactivator of the orphan nuclear receptor NGFI-B/Nur77.</title>
        <authorList>
            <person name="Rambaud J."/>
            <person name="Desroches J."/>
            <person name="Balsalobre A."/>
            <person name="Drouin J."/>
        </authorList>
    </citation>
    <scope>INTERACTION WITH NR4A3</scope>
</reference>
<reference key="17">
    <citation type="journal article" date="2009" name="Mol. Cell. Proteomics">
        <title>Large scale localization of protein phosphorylation by use of electron capture dissociation mass spectrometry.</title>
        <authorList>
            <person name="Sweet S.M."/>
            <person name="Bailey C.M."/>
            <person name="Cunningham D.L."/>
            <person name="Heath J.K."/>
            <person name="Cooper H.J."/>
        </authorList>
    </citation>
    <scope>ACETYLATION [LARGE SCALE ANALYSIS] AT ALA-2</scope>
    <scope>PHOSPHORYLATION [LARGE SCALE ANALYSIS] AT SER-23; SER-473 AND SER-501</scope>
    <scope>CLEAVAGE OF INITIATOR METHIONINE [LARGE SCALE ANALYSIS]</scope>
    <scope>IDENTIFICATION BY MASS SPECTROMETRY [LARGE SCALE ANALYSIS]</scope>
    <source>
        <tissue>Embryonic fibroblast</tissue>
    </source>
</reference>
<reference key="18">
    <citation type="journal article" date="2010" name="Cell">
        <title>A tissue-specific atlas of mouse protein phosphorylation and expression.</title>
        <authorList>
            <person name="Huttlin E.L."/>
            <person name="Jedrychowski M.P."/>
            <person name="Elias J.E."/>
            <person name="Goswami T."/>
            <person name="Rad R."/>
            <person name="Beausoleil S.A."/>
            <person name="Villen J."/>
            <person name="Haas W."/>
            <person name="Sowa M.E."/>
            <person name="Gygi S.P."/>
        </authorList>
    </citation>
    <scope>PHOSPHORYLATION [LARGE SCALE ANALYSIS] AT SER-438; SER-473; SER-489; SER-594; SER-752 AND TYR-755</scope>
    <scope>IDENTIFICATION BY MASS SPECTROMETRY [LARGE SCALE ANALYSIS]</scope>
    <source>
        <tissue>Brain</tissue>
        <tissue>Brown adipose tissue</tissue>
        <tissue>Heart</tissue>
        <tissue>Kidney</tissue>
        <tissue>Liver</tissue>
        <tissue>Lung</tissue>
        <tissue>Pancreas</tissue>
        <tissue>Spleen</tissue>
        <tissue>Testis</tissue>
    </source>
</reference>
<reference key="19">
    <citation type="journal article" date="2010" name="Nature">
        <title>Proviral silencing in embryonic stem cells requires the histone methyltransferase ESET.</title>
        <authorList>
            <person name="Matsui T."/>
            <person name="Leung D."/>
            <person name="Miyashita H."/>
            <person name="Maksakova I.A."/>
            <person name="Miyachi H."/>
            <person name="Kimura H."/>
            <person name="Tachibana M."/>
            <person name="Lorincz M.C."/>
            <person name="Shinkai Y."/>
        </authorList>
    </citation>
    <scope>FUNCTION</scope>
</reference>
<reference key="20">
    <citation type="journal article" date="2011" name="Development">
        <title>TRIM28 is required by the mouse KRAB domain protein ZFP568 to control convergent extension and morphogenesis of extra-embryonic tissues.</title>
        <authorList>
            <person name="Shibata M."/>
            <person name="Blauvelt K.E."/>
            <person name="Liem K.F. Jr."/>
            <person name="Garcia-Garcia M.J."/>
        </authorList>
    </citation>
    <scope>FUNCTION</scope>
    <scope>INTERACTION WITH ZFP568</scope>
    <scope>SUBCELLULAR LOCATION</scope>
    <scope>DISRUPTION PHENOTYPE</scope>
    <scope>MUTAGENESIS OF 713-CYS-HIS-714</scope>
</reference>
<reference key="21">
    <citation type="journal article" date="2011" name="Proc. Natl. Acad. Sci. U.S.A.">
        <title>Histone chaperone Spt6 is required for class switch recombination but not somatic hypermutation.</title>
        <authorList>
            <person name="Okazaki I.M."/>
            <person name="Okawa K."/>
            <person name="Kobayashi M."/>
            <person name="Yoshikawa K."/>
            <person name="Kawamoto S."/>
            <person name="Nagaoka H."/>
            <person name="Shinkura R."/>
            <person name="Kitawaki Y."/>
            <person name="Taniguchi H."/>
            <person name="Natsume T."/>
            <person name="Iemura S."/>
            <person name="Honjo T."/>
        </authorList>
    </citation>
    <scope>FUNCTION</scope>
    <scope>INTERACTION WITH AICDA</scope>
</reference>
<reference key="22">
    <citation type="journal article" date="2013" name="Mol. Cell">
        <title>SIRT5-mediated lysine desuccinylation impacts diverse metabolic pathways.</title>
        <authorList>
            <person name="Park J."/>
            <person name="Chen Y."/>
            <person name="Tishkoff D.X."/>
            <person name="Peng C."/>
            <person name="Tan M."/>
            <person name="Dai L."/>
            <person name="Xie Z."/>
            <person name="Zhang Y."/>
            <person name="Zwaans B.M."/>
            <person name="Skinner M.E."/>
            <person name="Lombard D.B."/>
            <person name="Zhao Y."/>
        </authorList>
    </citation>
    <scope>ACETYLATION [LARGE SCALE ANALYSIS] AT LYS-267 AND LYS-779</scope>
    <scope>IDENTIFICATION BY MASS SPECTROMETRY [LARGE SCALE ANALYSIS]</scope>
    <source>
        <tissue>Embryonic fibroblast</tissue>
    </source>
</reference>
<reference key="23">
    <citation type="journal article" date="2014" name="Nat. Struct. Mol. Biol.">
        <title>Temporal orchestration of repressive chromatin modifiers by circadian clock Period complexes.</title>
        <authorList>
            <person name="Duong H.A."/>
            <person name="Weitz C.J."/>
        </authorList>
    </citation>
    <scope>IDENTIFICATION IN A LARGE PER COMPLEX</scope>
</reference>
<reference key="24">
    <citation type="journal article" date="2014" name="Nature">
        <title>Citrullination regulates pluripotency and histone H1 binding to chromatin.</title>
        <authorList>
            <person name="Christophorou M.A."/>
            <person name="Castelo-Branco G."/>
            <person name="Halley-Stott R.P."/>
            <person name="Oliveira C.S."/>
            <person name="Loos R."/>
            <person name="Radzisheuskaya A."/>
            <person name="Mowen K.A."/>
            <person name="Bertone P."/>
            <person name="Silva J.C."/>
            <person name="Zernicka-Goetz M."/>
            <person name="Nielsen M.L."/>
            <person name="Gurdon J.B."/>
            <person name="Kouzarides T."/>
        </authorList>
    </citation>
    <scope>CITRULLINATION AT ARG-470 AND ARG-472</scope>
</reference>
<reference key="25">
    <citation type="journal article" date="2014" name="Nat. Commun.">
        <title>SIRT6 represses LINE1 retrotransposons by ribosylating KAP1 but this repression fails with stress and age.</title>
        <authorList>
            <person name="Van Meter M."/>
            <person name="Kashyap M."/>
            <person name="Rezazadeh S."/>
            <person name="Geneva A.J."/>
            <person name="Morello T.D."/>
            <person name="Seluanov A."/>
            <person name="Gorbunova V."/>
        </authorList>
    </citation>
    <scope>FUNCTION</scope>
    <scope>ADP-RIBOSYLATION</scope>
    <scope>INTERACTION WITH CBX5</scope>
</reference>
<reference key="26">
    <citation type="journal article" date="2016" name="PLoS ONE">
        <title>USP7 and TDP-43: pleiotropic regulation of cryptochrome protein stability paces the oscillation of the mammalian circadian clock.</title>
        <authorList>
            <person name="Hirano A."/>
            <person name="Nakagawa T."/>
            <person name="Yoshitane H."/>
            <person name="Oyama M."/>
            <person name="Kozuka-Hata H."/>
            <person name="Lanjakornsiripan D."/>
            <person name="Fukada Y."/>
        </authorList>
    </citation>
    <scope>INTERACTION WITH CRY1</scope>
</reference>
<reference key="27">
    <citation type="journal article" date="2016" name="PLoS ONE">
        <title>The Transcriptional Repressive Activity of KRAB Zinc Finger Proteins Does Not Correlate with Their Ability to Recruit TRIM28.</title>
        <authorList>
            <person name="Murphy K.E."/>
            <person name="Shylo N.A."/>
            <person name="Alexander K.A."/>
            <person name="Churchill A.J."/>
            <person name="Copperman C."/>
            <person name="Garcia-Garcia M.J."/>
        </authorList>
    </citation>
    <scope>INTERACTION WITH ZNF568</scope>
    <scope>FUNCTION</scope>
</reference>
<reference key="28">
    <citation type="journal article" date="2018" name="Mol. Cell">
        <title>MRI is a DNA damage response adaptor during classical non-homologous end joining.</title>
        <authorList>
            <person name="Hung P.J."/>
            <person name="Johnson B."/>
            <person name="Chen B.R."/>
            <person name="Byrum A.K."/>
            <person name="Bredemeyer A.L."/>
            <person name="Yewdell W.T."/>
            <person name="Johnson T.E."/>
            <person name="Lee B.J."/>
            <person name="Deivasigamani S."/>
            <person name="Hindi I."/>
            <person name="Amatya P."/>
            <person name="Gross M.L."/>
            <person name="Paull T.T."/>
            <person name="Pisapia D.J."/>
            <person name="Chaudhuri J."/>
            <person name="Petrini J.J.H."/>
            <person name="Mosammaparast N."/>
            <person name="Amarasinghe G.K."/>
            <person name="Zha S."/>
            <person name="Tyler J.K."/>
            <person name="Sleckman B.P."/>
        </authorList>
    </citation>
    <scope>INTERACTION WITH CYREN</scope>
</reference>
<comment type="function">
    <text evidence="3 14 15 16 18 20 22">Nuclear corepressor for KRAB domain-containing zinc finger proteins (KRAB-ZFPs) (PubMed:20164836, PubMed:22110054, PubMed:25247314, PubMed:27658112). Mediates gene silencing by recruiting CHD3, a subunit of the nucleosome remodeling and deacetylation (NuRD) complex, and SETDB1 (which specifically methylates histone H3 at 'Lys-9' (H3K9me)) to the promoter regions of KRAB target genes. Enhances transcriptional repression by coordinating the increase in H3K9me, the decrease in histone H3 'Lys-9 and 'Lys-14' acetylation (H3K9ac and H3K14ac, respectively) and the disposition of HP1 proteins to silence gene expression. Recruitment of SETDB1 induces heterochromatinization. May play a role as a coactivator for CEBPB and NR3C1 in the transcriptional activation of ORM1. Also a corepressor for ERBB4. Inhibits E2F1 activity by stimulating E2F1-HDAC1 complex formation and inhibiting E2F1 acetylation. May serve as a partial backup to prevent E2F1-mediated apoptosis in the absence of RB1. Important regulator of CDKN1A/p21(CIP1). Has E3 SUMO-protein ligase activity toward itself via its PHD-type zinc finger. Specifically sumoylates IRF7, thereby inhibiting its transactivation activity. Ubiquitinates p53/TP53 leading to its proteasomal degradation; the function is enhanced by MAGEC2 and MAGEA2, and possibly MAGEA3 and MAGEA6. Mediates the nuclear localization of KOX1, ZNF268 and ZNF300 transcription factors. Probably forms a corepressor complex required for activated KRAS-mediated promoter hypermethylation and transcriptional silencing of tumor suppressor genes (TSGs) or other tumor-related genes in colorectal cancer (CRC) cells. Required to maintain a transcriptionally repressive state of genes in undifferentiated embryonic stem cells (ESCs) (PubMed:20164836). In ESCs, in collaboration with SETDB1, is also required for H3K9me3 and silencing of endogenous and introduced retroviruses in a DNA-methylation independent-pathway (PubMed:20164836). Associates at promoter regions of tumor suppressor genes (TSGs) leading to their gene silencing. The SETDB1-TRIM28-ZNF274 complex may play a role in recruiting ATRX to the 3'-exons of zinc-finger coding genes with atypical chromatin signatures to establish or maintain/protect H3K9me3 at these transcriptionally active regions (By similarity). Acts as a corepressor for ZFP568 (PubMed:22110054, PubMed:27658112).</text>
</comment>
<comment type="catalytic activity">
    <reaction>
        <text>S-ubiquitinyl-[E2 ubiquitin-conjugating enzyme]-L-cysteine + [acceptor protein]-L-lysine = [E2 ubiquitin-conjugating enzyme]-L-cysteine + N(6)-ubiquitinyl-[acceptor protein]-L-lysine.</text>
        <dbReference type="EC" id="2.3.2.27"/>
    </reaction>
</comment>
<comment type="pathway">
    <text>Protein modification; protein sumoylation.</text>
</comment>
<comment type="subunit">
    <text evidence="2 3 9 10 11 13 15 16 18 19 20 21 22">Oligomer; the RBCC domain homotrimerizes and interacts with one molecule of KRAB to form the KRAB-KAP1 corepressor complex. Interacts with SETX (By similarity). Binding to a KRAB domain is an absolute requirement for silencing gene expression. Interacts with a number of KRAB-ZFP proteins including ZNF10, ZFP53, ZFP68, ZNF382 and ZNF256. Interacts with NCOR1, NR3C1 and CHD3. Interacts with CEBPB (via the RING-type and PHD-type zinc fingers). Interacts with CBX5 (via the PxVxL motif); the interaction occurs in interphase nuclei and competes for binding POGZ (PubMed:10330177, PubMed:10562550, PubMed:25247314). Interacts with POGZ; the interaction competes for interaction with CBX5. Interacts with SETDB1; the interaction is enhanced by KAP1 sumoylation, stimulates SETDB1 histone methyltransferase activity and gene silencing. Interacts (via the PHD-type zinc finger) with UBE2I; the interaction is required for sumoylation and repressor activity. Component of the TRIM28/KAP1-ERBB4-MDM2 complex involved in connecting growth factor and DNA damage responses. Interacts directly with ERBB4; the interaction represses ERBB4-mediated transcription activity. Interacts with MDM2; the interaction contributes to p53/TP53 inactivation. Component of the TRIM28/KAP1-MDM2-p53/TP53; involved in regulating p53/TP53 stabilization and activity. Interacts (via the leucine zipper alpha helical coiled-coil) with E2F1 (central region); the interaction inhibits E2F1 acetylation and transcriptional activity. Interacts with PPP1CA; the interaction dephosphorylates TRIM28 at Ser-824 and forms a complex at the p21 promoter site. Interacts with PPP1CB; the interaction is weak but is increased on dephosphorylation at Ser-824. Interacts with CEBPB and NR3C1. Interacts with CBX5 (via the PxVxL motif); the interaction occurs in interphase nuclei and competes for binding POGZ. Component of a ternary complex that includes TRIM28, a HP1 protein (CBX1, CBX3 OR CBX5), a KRAB domain-containing protein, and DNA. Interacts with SMARCAD1. Interacts with, and sumoylates IRF7. Interacts with MAGEC2. Part of a complex composed of TRIM28, HDAC1, HDAC2 and EHMT2. Interacts (via the RBCC domain) with KOX1 (via the KRAB domain), ZNF268 (via the KRAB domain) and ZNF300 (via the KRAB domain); the interactions increase KOX1, ZNF268 and ZNF300 nuclear localization activities. Interacts with AICDA. The large PER complex involved in the histone methylation is composed of at least PER2, CBX3, TRIM28, SUV39H1 and/or SUV39H2; CBX3 mediates the formation of the complex. Interacts with NR4A3; the interactions potentiates NR4A3 activity on NurRE promoter (PubMed:19321449). Interacts (unphosphorylated or phosphorylated form) with ZBTB1 (via BTB domain) (By similarity). Probably part of a corepressor complex containing ZNF304, TRIM28, SETDB1 and DNMT1. Interacts with ATRX. Forms a complex with ATRX, SETDB1 and ZNF274 (By similarity). Interacts with ZFP568; the interaction mediates ZFP568 transcriptional repression activity (PubMed:22110054, PubMed:27658112). Interacts with RRP1B (By similarity). Interacts with CRY1 (PubMed:27123980). Interacts with ZNF263; recruited to the SIX3 promoter along with other proteins involved in chromatin modification and transcriptional corepression where it contributes to transcriptional repression (By similarity). Interacts with CYREN (via XLF motif) (PubMed:30017584). Interacts with TRIM17; this interaction prevents TRIM28 activity (By similarity). Interacts with ZNF746 (By similarity). Interacts with PHF13 (By similarity). Interacts with ZNF354C (By similarity). Interacts with ZNF432; the interaction is independent of PARP1 (By similarity).</text>
</comment>
<comment type="interaction">
    <interactant intactId="EBI-346909">
        <id>Q62318</id>
    </interactant>
    <interactant intactId="EBI-77304">
        <id>O35613</id>
        <label>Daxx</label>
    </interactant>
    <organismsDiffer>false</organismsDiffer>
    <experiments>2</experiments>
</comment>
<comment type="interaction">
    <interactant intactId="EBI-346909">
        <id>Q62318</id>
    </interactant>
    <interactant intactId="EBI-10896863">
        <id>P12813</id>
        <label>Nr4a1</label>
    </interactant>
    <organismsDiffer>false</organismsDiffer>
    <experiments>3</experiments>
</comment>
<comment type="interaction">
    <interactant intactId="EBI-346909">
        <id>Q62318</id>
    </interactant>
    <interactant intactId="EBI-1173716">
        <id>P17918</id>
        <label>Pcna</label>
    </interactant>
    <organismsDiffer>false</organismsDiffer>
    <experiments>2</experiments>
</comment>
<comment type="interaction">
    <interactant intactId="EBI-6876996">
        <id>Q62318-1</id>
    </interactant>
    <interactant intactId="EBI-296306">
        <id>P45481</id>
        <label>Crebbp</label>
    </interactant>
    <organismsDiffer>false</organismsDiffer>
    <experiments>2</experiments>
</comment>
<comment type="interaction">
    <interactant intactId="EBI-6876996">
        <id>Q62318-1</id>
    </interactant>
    <interactant intactId="EBI-1606219">
        <id>P20263</id>
        <label>Pou5f1</label>
    </interactant>
    <organismsDiffer>false</organismsDiffer>
    <experiments>3</experiments>
</comment>
<comment type="subcellular location">
    <subcellularLocation>
        <location evidence="9 11 12 16">Nucleus</location>
    </subcellularLocation>
    <text evidence="3 9">Associated with centromeric heterochromatin during cell differentiation through CBX1 (PubMed:10330177). Localizes to sites of DNA damage (By similarity).</text>
</comment>
<comment type="alternative products">
    <event type="alternative splicing"/>
    <isoform>
        <id>Q62318-1</id>
        <name>1</name>
        <sequence type="displayed"/>
    </isoform>
    <isoform>
        <id>Q62318-2</id>
        <name>2</name>
        <sequence type="described" ref="VSP_010899 VSP_010900"/>
    </isoform>
</comment>
<comment type="domain">
    <text evidence="3">The HP1 box is both necessary and sufficient for HP1 binding.</text>
</comment>
<comment type="domain">
    <text evidence="3">The PHD-type zinc finger enhances CEBPB transcriptional activity. The PHD-type zinc finger, the HP1 box and the bromo domain, function together to assemble the machinery required for repression of KRAB domain-containing proteins. Acts as an intramolecular SUMO E3 ligase for autosumoylation of bromodomain.</text>
</comment>
<comment type="domain">
    <text evidence="3">The RING-finger-B Box-coiled-coil/tripartite motif (RBCC/TRIM motif) is required for interaction with the KRAB domain of KRAB-zinc finger proteins. Binds four zinc ions per molecule. The RING finger and the N-terminal of the leucine zipper alpha helical coiled-coil region of RBCC are required for oligomerization.</text>
</comment>
<comment type="domain">
    <text evidence="3">Contains one Pro-Xaa-Val-Xaa-Leu (PxVxL) motif, which is required for interaction with chromoshadow domains. This motif requires additional residues -7, -6, +4 and +5 of the central Val which contact the chromoshadow domain.</text>
</comment>
<comment type="PTM">
    <text evidence="3">ATM-induced phosphorylation on Ser-824 represses sumoylation leading to the de-repression of expression of a subset of genes involved in cell cycle control and apoptosis in response to genotoxic stress. Dephosphorylation by the phosphatases, PPP1CA and PP1CB forms, allows sumoylation and expression of TRIM28 target genes.</text>
</comment>
<comment type="PTM">
    <text evidence="3">Sumoylation/desumoylation events regulate TRIM28-mediated transcriptional repression. Sumoylation is required for interaction with CHD3 and SETDB1 and the corepressor activity. Represses and is repressed by Ser-824 phosphorylation. Enhances the TRIM28 corepressor activity, inhibiting transcriptional activity of a number of genes including GADD45A and CDKN1A/p21. Lys-554, Lys-779 and Lys-804 are the major sites of sumoylation. In response to Dox-induced DNA damage, enhanced phosphorylation on Ser-824 prevents sumoylation and allows de-repression of CDKN1A/p21.</text>
</comment>
<comment type="PTM">
    <text evidence="3">Auto-ubiquitinated; enhanced by MAGEA2 and MAGEC2.</text>
</comment>
<comment type="PTM">
    <text evidence="17">Citrullinated by PADI4.</text>
</comment>
<comment type="PTM">
    <text evidence="18">ADP-ribosylated by SIRT6, promoting TRIM28/KAP1 interaction with CBX5, thereby contributing to the packaging of LINE-1 retrotransposon elements into transcriptionally repressive heterochromatin.</text>
</comment>
<comment type="disruption phenotype">
    <text evidence="16">Embryonic lethal with arrest at stage E5.5. Gastrulation fails and expression of the critical mesoderm differentiation factor T/brachyury is lost.</text>
</comment>
<comment type="similarity">
    <text evidence="23">Belongs to the TRIM/RBCC family.</text>
</comment>
<accession>Q62318</accession>
<accession>P70391</accession>
<accession>Q8C283</accession>
<accession>Q99PN4</accession>
<sequence>MAASAAATAAASAATAASAASGSPGSGEGSAGGEKRPAASSAAAASAAASSPAGGGGEAQELLEHCGVCRERLRPERDPRLLPCLHSACSACLGPATPAAANNSGDGGSAGDGAMVDCPVCKQQCYSKDIVENYFMRDSGSKASSDSQDANQCCTSCEDNAPATSYCVECSEPLCETCVEAHQRVKYTKDHTVRSTGPAKTRDGERTVYCNVHKHEPLVLFCESCDTLTCRDCQLNAHKDHQYQFLEDAVRNQRKLLASLVKRLGDKHATLQKNTKEVRSSIRQVSDVQKRVQVDVKMAILQIMKELNKRGRVLVNDAQKVTEGQQERLERQHWTMTKIQKHQEHILRFASWALESDNNTALLLSKKLIYFQLHRALKMIVDPVEPHGEMKFQWDLNAWTKSAEAFGKIVAERPGTNSTGPGPMAPPRAPGPLSKQGSGSSQPMEVQEGYGFGSDDPYSSAEPHVSGMKRSRSGEGEVSGLLRKVPRVSLERLDLDLTSDSQPPVFKVFPGSTTEDYNLIVIERGAAAAAAGQAGTVPPGAPGAPPLPGMAIVKEEETEAAIGAPPAAPEGPETKPVLMPLTEGPGAEGPRLASPSGSTSSGLEVVAPEVTSAPVSGPGILDDSATICRVCQKPGDLVMCNQCEFCFHLDCHLPALQDVPGEEWSCSLCHVLPDLKEEDGSLSLDGADSTGVVAKLSPANQRKCERVLLALFCHEPCRPLHQLATDSTFSMEQPGGTLDLTLIRARLQEKLSPPYSSPQEFAQDVGRMFKQFNKLTEDKADVQSIIGLQRFFETRMNDAFGDTKFSAVLVEPPPLNLPSAGLSSQELSGPGDGP</sequence>
<proteinExistence type="evidence at protein level"/>
<dbReference type="EC" id="2.3.2.27"/>
<dbReference type="EMBL" id="X99644">
    <property type="protein sequence ID" value="CAA67963.1"/>
    <property type="molecule type" value="mRNA"/>
</dbReference>
<dbReference type="EMBL" id="U67303">
    <property type="protein sequence ID" value="AAB17272.1"/>
    <property type="molecule type" value="mRNA"/>
</dbReference>
<dbReference type="EMBL" id="AF230878">
    <property type="protein sequence ID" value="AAG02638.1"/>
    <property type="molecule type" value="Genomic_DNA"/>
</dbReference>
<dbReference type="EMBL" id="AF230391">
    <property type="protein sequence ID" value="AAG50170.1"/>
    <property type="molecule type" value="mRNA"/>
</dbReference>
<dbReference type="EMBL" id="AF230392">
    <property type="protein sequence ID" value="AAG50171.1"/>
    <property type="molecule type" value="mRNA"/>
</dbReference>
<dbReference type="EMBL" id="BC058391">
    <property type="protein sequence ID" value="AAH58391.1"/>
    <property type="molecule type" value="mRNA"/>
</dbReference>
<dbReference type="EMBL" id="AK089084">
    <property type="protein sequence ID" value="BAC40742.1"/>
    <property type="molecule type" value="mRNA"/>
</dbReference>
<dbReference type="CCDS" id="CCDS20823.1">
    <molecule id="Q62318-1"/>
</dbReference>
<dbReference type="RefSeq" id="NP_035718.2">
    <molecule id="Q62318-1"/>
    <property type="nucleotide sequence ID" value="NM_011588.3"/>
</dbReference>
<dbReference type="PDB" id="6O5K">
    <property type="method" value="X-ray"/>
    <property type="resolution" value="1.60 A"/>
    <property type="chains" value="A/B=135-203"/>
</dbReference>
<dbReference type="PDBsum" id="6O5K"/>
<dbReference type="BMRB" id="Q62318"/>
<dbReference type="SASBDB" id="Q62318"/>
<dbReference type="SMR" id="Q62318"/>
<dbReference type="BioGRID" id="204197">
    <property type="interactions" value="86"/>
</dbReference>
<dbReference type="CORUM" id="Q62318"/>
<dbReference type="DIP" id="DIP-31477N"/>
<dbReference type="ELM" id="Q62318"/>
<dbReference type="FunCoup" id="Q62318">
    <property type="interactions" value="2757"/>
</dbReference>
<dbReference type="IntAct" id="Q62318">
    <property type="interactions" value="62"/>
</dbReference>
<dbReference type="MINT" id="Q62318"/>
<dbReference type="STRING" id="10090.ENSMUSP00000005705"/>
<dbReference type="GlyGen" id="Q62318">
    <property type="glycosylation" value="3 sites, 1 N-linked glycan (1 site), 1 O-linked glycan (2 sites)"/>
</dbReference>
<dbReference type="iPTMnet" id="Q62318"/>
<dbReference type="MetOSite" id="Q62318"/>
<dbReference type="PhosphoSitePlus" id="Q62318"/>
<dbReference type="SwissPalm" id="Q62318"/>
<dbReference type="REPRODUCTION-2DPAGE" id="IPI00312128"/>
<dbReference type="REPRODUCTION-2DPAGE" id="Q62318"/>
<dbReference type="jPOST" id="Q62318"/>
<dbReference type="PaxDb" id="10090-ENSMUSP00000005705"/>
<dbReference type="PeptideAtlas" id="Q62318"/>
<dbReference type="ProteomicsDB" id="259189">
    <molecule id="Q62318-1"/>
</dbReference>
<dbReference type="ProteomicsDB" id="259190">
    <molecule id="Q62318-2"/>
</dbReference>
<dbReference type="Pumba" id="Q62318"/>
<dbReference type="Antibodypedia" id="4109">
    <property type="antibodies" value="828 antibodies from 50 providers"/>
</dbReference>
<dbReference type="DNASU" id="21849"/>
<dbReference type="Ensembl" id="ENSMUST00000005705.8">
    <molecule id="Q62318-1"/>
    <property type="protein sequence ID" value="ENSMUSP00000005705.8"/>
    <property type="gene ID" value="ENSMUSG00000005566.15"/>
</dbReference>
<dbReference type="GeneID" id="21849"/>
<dbReference type="KEGG" id="mmu:21849"/>
<dbReference type="UCSC" id="uc009ffb.2">
    <molecule id="Q62318-1"/>
    <property type="organism name" value="mouse"/>
</dbReference>
<dbReference type="AGR" id="MGI:109274"/>
<dbReference type="CTD" id="10155"/>
<dbReference type="MGI" id="MGI:109274">
    <property type="gene designation" value="Trim28"/>
</dbReference>
<dbReference type="VEuPathDB" id="HostDB:ENSMUSG00000005566"/>
<dbReference type="eggNOG" id="KOG2177">
    <property type="taxonomic scope" value="Eukaryota"/>
</dbReference>
<dbReference type="GeneTree" id="ENSGT00940000160527"/>
<dbReference type="HOGENOM" id="CLU_005817_2_0_1"/>
<dbReference type="InParanoid" id="Q62318"/>
<dbReference type="OMA" id="DCKDEVP"/>
<dbReference type="OrthoDB" id="1870062at2759"/>
<dbReference type="PhylomeDB" id="Q62318"/>
<dbReference type="TreeFam" id="TF106455"/>
<dbReference type="Reactome" id="R-MMU-212436">
    <property type="pathway name" value="Generic Transcription Pathway"/>
</dbReference>
<dbReference type="Reactome" id="R-MMU-9843940">
    <property type="pathway name" value="Regulation of endogenous retroelements by KRAB-ZFP proteins"/>
</dbReference>
<dbReference type="UniPathway" id="UPA00886"/>
<dbReference type="BioGRID-ORCS" id="21849">
    <property type="hits" value="32 hits in 124 CRISPR screens"/>
</dbReference>
<dbReference type="ChiTaRS" id="Trim28">
    <property type="organism name" value="mouse"/>
</dbReference>
<dbReference type="PRO" id="PR:Q62318"/>
<dbReference type="Proteomes" id="UP000000589">
    <property type="component" value="Chromosome 7"/>
</dbReference>
<dbReference type="RNAct" id="Q62318">
    <property type="molecule type" value="protein"/>
</dbReference>
<dbReference type="Bgee" id="ENSMUSG00000005566">
    <property type="expression patterns" value="Expressed in floor plate of midbrain and 278 other cell types or tissues"/>
</dbReference>
<dbReference type="ExpressionAtlas" id="Q62318">
    <property type="expression patterns" value="baseline and differential"/>
</dbReference>
<dbReference type="GO" id="GO:0000785">
    <property type="term" value="C:chromatin"/>
    <property type="evidence" value="ECO:0000314"/>
    <property type="project" value="MGI"/>
</dbReference>
<dbReference type="GO" id="GO:0000791">
    <property type="term" value="C:euchromatin"/>
    <property type="evidence" value="ECO:0000314"/>
    <property type="project" value="MGI"/>
</dbReference>
<dbReference type="GO" id="GO:0000792">
    <property type="term" value="C:heterochromatin"/>
    <property type="evidence" value="ECO:0000314"/>
    <property type="project" value="MGI"/>
</dbReference>
<dbReference type="GO" id="GO:0005654">
    <property type="term" value="C:nucleoplasm"/>
    <property type="evidence" value="ECO:0000314"/>
    <property type="project" value="MGI"/>
</dbReference>
<dbReference type="GO" id="GO:0005634">
    <property type="term" value="C:nucleus"/>
    <property type="evidence" value="ECO:0000314"/>
    <property type="project" value="HGNC-UCL"/>
</dbReference>
<dbReference type="GO" id="GO:0090575">
    <property type="term" value="C:RNA polymerase II transcription regulator complex"/>
    <property type="evidence" value="ECO:0000314"/>
    <property type="project" value="BHF-UCL"/>
</dbReference>
<dbReference type="GO" id="GO:0070087">
    <property type="term" value="F:chromo shadow domain binding"/>
    <property type="evidence" value="ECO:0007669"/>
    <property type="project" value="Ensembl"/>
</dbReference>
<dbReference type="GO" id="GO:0003677">
    <property type="term" value="F:DNA binding"/>
    <property type="evidence" value="ECO:0000314"/>
    <property type="project" value="MGI"/>
</dbReference>
<dbReference type="GO" id="GO:0035851">
    <property type="term" value="F:Krueppel-associated box domain binding"/>
    <property type="evidence" value="ECO:0000250"/>
    <property type="project" value="UniProtKB"/>
</dbReference>
<dbReference type="GO" id="GO:1990841">
    <property type="term" value="F:promoter-specific chromatin binding"/>
    <property type="evidence" value="ECO:0000250"/>
    <property type="project" value="UniProtKB"/>
</dbReference>
<dbReference type="GO" id="GO:0004672">
    <property type="term" value="F:protein kinase activity"/>
    <property type="evidence" value="ECO:0000314"/>
    <property type="project" value="MGI"/>
</dbReference>
<dbReference type="GO" id="GO:0061665">
    <property type="term" value="F:SUMO ligase activity"/>
    <property type="evidence" value="ECO:0000304"/>
    <property type="project" value="Reactome"/>
</dbReference>
<dbReference type="GO" id="GO:0003713">
    <property type="term" value="F:transcription coactivator activity"/>
    <property type="evidence" value="ECO:0000314"/>
    <property type="project" value="UniProtKB"/>
</dbReference>
<dbReference type="GO" id="GO:0003714">
    <property type="term" value="F:transcription corepressor activity"/>
    <property type="evidence" value="ECO:0007669"/>
    <property type="project" value="Ensembl"/>
</dbReference>
<dbReference type="GO" id="GO:0031625">
    <property type="term" value="F:ubiquitin protein ligase binding"/>
    <property type="evidence" value="ECO:0007669"/>
    <property type="project" value="Ensembl"/>
</dbReference>
<dbReference type="GO" id="GO:0004842">
    <property type="term" value="F:ubiquitin-protein transferase activity"/>
    <property type="evidence" value="ECO:0007669"/>
    <property type="project" value="Ensembl"/>
</dbReference>
<dbReference type="GO" id="GO:0008270">
    <property type="term" value="F:zinc ion binding"/>
    <property type="evidence" value="ECO:0007669"/>
    <property type="project" value="UniProtKB-KW"/>
</dbReference>
<dbReference type="GO" id="GO:0060028">
    <property type="term" value="P:convergent extension involved in axis elongation"/>
    <property type="evidence" value="ECO:0000315"/>
    <property type="project" value="MGI"/>
</dbReference>
<dbReference type="GO" id="GO:0006346">
    <property type="term" value="P:DNA methylation-dependent constitutive heterochromatin formation"/>
    <property type="evidence" value="ECO:0000315"/>
    <property type="project" value="UniProtKB"/>
</dbReference>
<dbReference type="GO" id="GO:0006281">
    <property type="term" value="P:DNA repair"/>
    <property type="evidence" value="ECO:0007669"/>
    <property type="project" value="Ensembl"/>
</dbReference>
<dbReference type="GO" id="GO:0007566">
    <property type="term" value="P:embryo implantation"/>
    <property type="evidence" value="ECO:0000315"/>
    <property type="project" value="MGI"/>
</dbReference>
<dbReference type="GO" id="GO:0060669">
    <property type="term" value="P:embryonic placenta morphogenesis"/>
    <property type="evidence" value="ECO:0000315"/>
    <property type="project" value="MGI"/>
</dbReference>
<dbReference type="GO" id="GO:0043045">
    <property type="term" value="P:epigenetic programming of gene expression"/>
    <property type="evidence" value="ECO:0000315"/>
    <property type="project" value="MGI"/>
</dbReference>
<dbReference type="GO" id="GO:0001837">
    <property type="term" value="P:epithelial to mesenchymal transition"/>
    <property type="evidence" value="ECO:0000314"/>
    <property type="project" value="HGNC-UCL"/>
</dbReference>
<dbReference type="GO" id="GO:0071514">
    <property type="term" value="P:genomic imprinting"/>
    <property type="evidence" value="ECO:0000315"/>
    <property type="project" value="MGI"/>
</dbReference>
<dbReference type="GO" id="GO:0001701">
    <property type="term" value="P:in utero embryonic development"/>
    <property type="evidence" value="ECO:0000315"/>
    <property type="project" value="MGI"/>
</dbReference>
<dbReference type="GO" id="GO:0045087">
    <property type="term" value="P:innate immune response"/>
    <property type="evidence" value="ECO:0000314"/>
    <property type="project" value="MGI"/>
</dbReference>
<dbReference type="GO" id="GO:0045892">
    <property type="term" value="P:negative regulation of DNA-templated transcription"/>
    <property type="evidence" value="ECO:0000314"/>
    <property type="project" value="MGI"/>
</dbReference>
<dbReference type="GO" id="GO:0045869">
    <property type="term" value="P:negative regulation of single stranded viral RNA replication via double stranded DNA intermediate"/>
    <property type="evidence" value="ECO:0000314"/>
    <property type="project" value="MGI"/>
</dbReference>
<dbReference type="GO" id="GO:0000122">
    <property type="term" value="P:negative regulation of transcription by RNA polymerase II"/>
    <property type="evidence" value="ECO:0000314"/>
    <property type="project" value="MGI"/>
</dbReference>
<dbReference type="GO" id="GO:0045739">
    <property type="term" value="P:positive regulation of DNA repair"/>
    <property type="evidence" value="ECO:0007669"/>
    <property type="project" value="Ensembl"/>
</dbReference>
<dbReference type="GO" id="GO:0045893">
    <property type="term" value="P:positive regulation of DNA-templated transcription"/>
    <property type="evidence" value="ECO:0000314"/>
    <property type="project" value="HGNC-UCL"/>
</dbReference>
<dbReference type="GO" id="GO:0042307">
    <property type="term" value="P:positive regulation of protein import into nucleus"/>
    <property type="evidence" value="ECO:0000250"/>
    <property type="project" value="UniProtKB"/>
</dbReference>
<dbReference type="GO" id="GO:0016925">
    <property type="term" value="P:protein sumoylation"/>
    <property type="evidence" value="ECO:0007669"/>
    <property type="project" value="UniProtKB-UniPathway"/>
</dbReference>
<dbReference type="GO" id="GO:0044790">
    <property type="term" value="P:suppression of viral release by host"/>
    <property type="evidence" value="ECO:0007669"/>
    <property type="project" value="Ensembl"/>
</dbReference>
<dbReference type="CDD" id="cd19846">
    <property type="entry name" value="Bbox1_TIF1b_C-VI"/>
    <property type="match status" value="1"/>
</dbReference>
<dbReference type="CDD" id="cd19829">
    <property type="entry name" value="Bbox2_TIF1b_C-VI"/>
    <property type="match status" value="1"/>
</dbReference>
<dbReference type="CDD" id="cd15623">
    <property type="entry name" value="PHD_TIF1beta"/>
    <property type="match status" value="1"/>
</dbReference>
<dbReference type="CDD" id="cd16765">
    <property type="entry name" value="RING-HC_TIF1beta"/>
    <property type="match status" value="1"/>
</dbReference>
<dbReference type="FunFam" id="1.20.920.10:FF:000030">
    <property type="entry name" value="transcription intermediary factor 1-beta"/>
    <property type="match status" value="1"/>
</dbReference>
<dbReference type="FunFam" id="3.30.40.10:FF:000272">
    <property type="entry name" value="transcription intermediary factor 1-beta"/>
    <property type="match status" value="1"/>
</dbReference>
<dbReference type="FunFam" id="3.30.160.60:FF:000074">
    <property type="entry name" value="Tripartite motif containing 66"/>
    <property type="match status" value="1"/>
</dbReference>
<dbReference type="Gene3D" id="1.20.920.10">
    <property type="entry name" value="Bromodomain-like"/>
    <property type="match status" value="1"/>
</dbReference>
<dbReference type="Gene3D" id="3.30.160.60">
    <property type="entry name" value="Classic Zinc Finger"/>
    <property type="match status" value="1"/>
</dbReference>
<dbReference type="Gene3D" id="3.30.40.10">
    <property type="entry name" value="Zinc/RING finger domain, C3HC4 (zinc finger)"/>
    <property type="match status" value="2"/>
</dbReference>
<dbReference type="InterPro" id="IPR003649">
    <property type="entry name" value="Bbox_C"/>
</dbReference>
<dbReference type="InterPro" id="IPR001487">
    <property type="entry name" value="Bromodomain"/>
</dbReference>
<dbReference type="InterPro" id="IPR036427">
    <property type="entry name" value="Bromodomain-like_sf"/>
</dbReference>
<dbReference type="InterPro" id="IPR037373">
    <property type="entry name" value="KAP1"/>
</dbReference>
<dbReference type="InterPro" id="IPR047059">
    <property type="entry name" value="TIF1b_Bbox1_Znf"/>
</dbReference>
<dbReference type="InterPro" id="IPR047058">
    <property type="entry name" value="TIF1b_Bbox2_Znf"/>
</dbReference>
<dbReference type="InterPro" id="IPR042713">
    <property type="entry name" value="TIF1beta_RING-HC"/>
</dbReference>
<dbReference type="InterPro" id="IPR019786">
    <property type="entry name" value="Zinc_finger_PHD-type_CS"/>
</dbReference>
<dbReference type="InterPro" id="IPR000315">
    <property type="entry name" value="Znf_B-box"/>
</dbReference>
<dbReference type="InterPro" id="IPR011011">
    <property type="entry name" value="Znf_FYVE_PHD"/>
</dbReference>
<dbReference type="InterPro" id="IPR001965">
    <property type="entry name" value="Znf_PHD"/>
</dbReference>
<dbReference type="InterPro" id="IPR019787">
    <property type="entry name" value="Znf_PHD-finger"/>
</dbReference>
<dbReference type="InterPro" id="IPR001841">
    <property type="entry name" value="Znf_RING"/>
</dbReference>
<dbReference type="InterPro" id="IPR013083">
    <property type="entry name" value="Znf_RING/FYVE/PHD"/>
</dbReference>
<dbReference type="PANTHER" id="PTHR45915">
    <property type="entry name" value="TRANSCRIPTION INTERMEDIARY FACTOR"/>
    <property type="match status" value="1"/>
</dbReference>
<dbReference type="PANTHER" id="PTHR45915:SF8">
    <property type="entry name" value="TRIPARTITE MOTIF CONTAINING 28"/>
    <property type="match status" value="1"/>
</dbReference>
<dbReference type="Pfam" id="PF00628">
    <property type="entry name" value="PHD"/>
    <property type="match status" value="1"/>
</dbReference>
<dbReference type="Pfam" id="PF00643">
    <property type="entry name" value="zf-B_box"/>
    <property type="match status" value="2"/>
</dbReference>
<dbReference type="Pfam" id="PF14634">
    <property type="entry name" value="zf-RING_5"/>
    <property type="match status" value="1"/>
</dbReference>
<dbReference type="SMART" id="SM00502">
    <property type="entry name" value="BBC"/>
    <property type="match status" value="1"/>
</dbReference>
<dbReference type="SMART" id="SM00336">
    <property type="entry name" value="BBOX"/>
    <property type="match status" value="2"/>
</dbReference>
<dbReference type="SMART" id="SM00297">
    <property type="entry name" value="BROMO"/>
    <property type="match status" value="1"/>
</dbReference>
<dbReference type="SMART" id="SM00249">
    <property type="entry name" value="PHD"/>
    <property type="match status" value="1"/>
</dbReference>
<dbReference type="SMART" id="SM00184">
    <property type="entry name" value="RING"/>
    <property type="match status" value="2"/>
</dbReference>
<dbReference type="SUPFAM" id="SSF57845">
    <property type="entry name" value="B-box zinc-binding domain"/>
    <property type="match status" value="1"/>
</dbReference>
<dbReference type="SUPFAM" id="SSF57903">
    <property type="entry name" value="FYVE/PHD zinc finger"/>
    <property type="match status" value="1"/>
</dbReference>
<dbReference type="SUPFAM" id="SSF57850">
    <property type="entry name" value="RING/U-box"/>
    <property type="match status" value="1"/>
</dbReference>
<dbReference type="PROSITE" id="PS50014">
    <property type="entry name" value="BROMODOMAIN_2"/>
    <property type="match status" value="1"/>
</dbReference>
<dbReference type="PROSITE" id="PS50119">
    <property type="entry name" value="ZF_BBOX"/>
    <property type="match status" value="2"/>
</dbReference>
<dbReference type="PROSITE" id="PS01359">
    <property type="entry name" value="ZF_PHD_1"/>
    <property type="match status" value="1"/>
</dbReference>
<dbReference type="PROSITE" id="PS50016">
    <property type="entry name" value="ZF_PHD_2"/>
    <property type="match status" value="1"/>
</dbReference>
<dbReference type="PROSITE" id="PS50089">
    <property type="entry name" value="ZF_RING_2"/>
    <property type="match status" value="1"/>
</dbReference>
<feature type="initiator methionine" description="Removed" evidence="26 27">
    <location>
        <position position="1"/>
    </location>
</feature>
<feature type="chain" id="PRO_0000056393" description="Transcription intermediary factor 1-beta">
    <location>
        <begin position="2"/>
        <end position="834"/>
    </location>
</feature>
<feature type="domain" description="Bromo" evidence="5">
    <location>
        <begin position="695"/>
        <end position="799"/>
    </location>
</feature>
<feature type="zinc finger region" description="RING-type" evidence="7">
    <location>
        <begin position="66"/>
        <end position="122"/>
    </location>
</feature>
<feature type="zinc finger region" description="B box-type 1" evidence="4">
    <location>
        <begin position="149"/>
        <end position="196"/>
    </location>
</feature>
<feature type="zinc finger region" description="B box-type 2" evidence="4">
    <location>
        <begin position="205"/>
        <end position="246"/>
    </location>
</feature>
<feature type="zinc finger region" description="PHD-type" evidence="6">
    <location>
        <begin position="625"/>
        <end position="672"/>
    </location>
</feature>
<feature type="region of interest" description="Disordered" evidence="8">
    <location>
        <begin position="13"/>
        <end position="56"/>
    </location>
</feature>
<feature type="region of interest" description="Leucine zipper alpha helical coiled-coil region">
    <location>
        <begin position="247"/>
        <end position="377"/>
    </location>
</feature>
<feature type="region of interest" description="Interaction with MAGEC2" evidence="1">
    <location>
        <begin position="248"/>
        <end position="377"/>
    </location>
</feature>
<feature type="region of interest" description="Involved in binding PPP1CA" evidence="1">
    <location>
        <begin position="367"/>
        <end position="371"/>
    </location>
</feature>
<feature type="region of interest" description="Disordered" evidence="8">
    <location>
        <begin position="412"/>
        <end position="480"/>
    </location>
</feature>
<feature type="region of interest" description="HP1 box">
    <location>
        <begin position="476"/>
        <end position="513"/>
    </location>
</feature>
<feature type="region of interest" description="Disordered" evidence="8">
    <location>
        <begin position="581"/>
        <end position="602"/>
    </location>
</feature>
<feature type="short sequence motif" description="PxVxL motif">
    <location>
        <begin position="481"/>
        <end position="494"/>
    </location>
</feature>
<feature type="compositionally biased region" description="Low complexity" evidence="8">
    <location>
        <begin position="13"/>
        <end position="23"/>
    </location>
</feature>
<feature type="compositionally biased region" description="Low complexity" evidence="8">
    <location>
        <begin position="38"/>
        <end position="52"/>
    </location>
</feature>
<feature type="compositionally biased region" description="Polar residues" evidence="8">
    <location>
        <begin position="435"/>
        <end position="444"/>
    </location>
</feature>
<feature type="binding site" evidence="4">
    <location>
        <position position="154"/>
    </location>
    <ligand>
        <name>Zn(2+)</name>
        <dbReference type="ChEBI" id="CHEBI:29105"/>
        <label>1</label>
    </ligand>
</feature>
<feature type="binding site" evidence="4">
    <location>
        <position position="157"/>
    </location>
    <ligand>
        <name>Zn(2+)</name>
        <dbReference type="ChEBI" id="CHEBI:29105"/>
        <label>1</label>
    </ligand>
</feature>
<feature type="binding site" evidence="4">
    <location>
        <position position="178"/>
    </location>
    <ligand>
        <name>Zn(2+)</name>
        <dbReference type="ChEBI" id="CHEBI:29105"/>
        <label>1</label>
    </ligand>
</feature>
<feature type="binding site" evidence="4">
    <location>
        <position position="182"/>
    </location>
    <ligand>
        <name>Zn(2+)</name>
        <dbReference type="ChEBI" id="CHEBI:29105"/>
        <label>1</label>
    </ligand>
</feature>
<feature type="binding site" evidence="4">
    <location>
        <position position="210"/>
    </location>
    <ligand>
        <name>Zn(2+)</name>
        <dbReference type="ChEBI" id="CHEBI:29105"/>
        <label>2</label>
    </ligand>
</feature>
<feature type="binding site" evidence="4">
    <location>
        <position position="213"/>
    </location>
    <ligand>
        <name>Zn(2+)</name>
        <dbReference type="ChEBI" id="CHEBI:29105"/>
        <label>2</label>
    </ligand>
</feature>
<feature type="binding site" evidence="4">
    <location>
        <position position="233"/>
    </location>
    <ligand>
        <name>Zn(2+)</name>
        <dbReference type="ChEBI" id="CHEBI:29105"/>
        <label>2</label>
    </ligand>
</feature>
<feature type="binding site" evidence="4">
    <location>
        <position position="238"/>
    </location>
    <ligand>
        <name>Zn(2+)</name>
        <dbReference type="ChEBI" id="CHEBI:29105"/>
        <label>2</label>
    </ligand>
</feature>
<feature type="modified residue" description="N-acetylalanine" evidence="26 27">
    <location>
        <position position="2"/>
    </location>
</feature>
<feature type="modified residue" description="Phosphoserine" evidence="27">
    <location>
        <position position="23"/>
    </location>
</feature>
<feature type="modified residue" description="Phosphoserine" evidence="2">
    <location>
        <position position="26"/>
    </location>
</feature>
<feature type="modified residue" description="Phosphoserine" evidence="3">
    <location>
        <position position="30"/>
    </location>
</feature>
<feature type="modified residue" description="Phosphoserine" evidence="3">
    <location>
        <position position="51"/>
    </location>
</feature>
<feature type="modified residue" description="Phosphoserine" evidence="3">
    <location>
        <position position="139"/>
    </location>
</feature>
<feature type="modified residue" description="N6-acetyllysine" evidence="30">
    <location>
        <position position="267"/>
    </location>
</feature>
<feature type="modified residue" description="N6-acetyllysine; alternate" evidence="3">
    <location>
        <position position="305"/>
    </location>
</feature>
<feature type="modified residue" description="N6-acetyllysine" evidence="3">
    <location>
        <position position="341"/>
    </location>
</feature>
<feature type="modified residue" description="N6-acetyllysine; alternate" evidence="3">
    <location>
        <position position="378"/>
    </location>
</feature>
<feature type="modified residue" description="Phosphoserine" evidence="3">
    <location>
        <position position="418"/>
    </location>
</feature>
<feature type="modified residue" description="Phosphoserine" evidence="29">
    <location>
        <position position="438"/>
    </location>
</feature>
<feature type="modified residue" description="Phosphoserine" evidence="3">
    <location>
        <position position="440"/>
    </location>
</feature>
<feature type="modified residue" description="Phosphoserine" evidence="3">
    <location>
        <position position="454"/>
    </location>
</feature>
<feature type="modified residue" description="Citrulline" evidence="17">
    <location>
        <position position="470"/>
    </location>
</feature>
<feature type="modified residue" description="Phosphoserine" evidence="3">
    <location>
        <position position="471"/>
    </location>
</feature>
<feature type="modified residue" description="Citrulline" evidence="17">
    <location>
        <position position="472"/>
    </location>
</feature>
<feature type="modified residue" description="Phosphoserine" evidence="25 26 27 28 29">
    <location>
        <position position="473"/>
    </location>
</feature>
<feature type="modified residue" description="Phosphoserine" evidence="3">
    <location>
        <position position="479"/>
    </location>
</feature>
<feature type="modified residue" description="Phosphoserine" evidence="29">
    <location>
        <position position="489"/>
    </location>
</feature>
<feature type="modified residue" description="Phosphothreonine" evidence="3">
    <location>
        <position position="498"/>
    </location>
</feature>
<feature type="modified residue" description="Phosphoserine" evidence="27">
    <location>
        <position position="501"/>
    </location>
</feature>
<feature type="modified residue" description="Phosphoserine" evidence="29">
    <location>
        <position position="594"/>
    </location>
</feature>
<feature type="modified residue" description="Phosphoserine" evidence="3">
    <location>
        <position position="683"/>
    </location>
</feature>
<feature type="modified residue" description="Phosphoserine" evidence="3">
    <location>
        <position position="689"/>
    </location>
</feature>
<feature type="modified residue" description="Phosphoserine" evidence="3">
    <location>
        <position position="697"/>
    </location>
</feature>
<feature type="modified residue" description="Phosphoserine" evidence="29">
    <location>
        <position position="752"/>
    </location>
</feature>
<feature type="modified residue" description="Phosphotyrosine" evidence="29">
    <location>
        <position position="755"/>
    </location>
</feature>
<feature type="modified residue" description="Phosphoserine" evidence="3">
    <location>
        <position position="757"/>
    </location>
</feature>
<feature type="modified residue" description="N6-acetyllysine; alternate" evidence="3">
    <location>
        <position position="770"/>
    </location>
</feature>
<feature type="modified residue" description="N6-acetyllysine; alternate" evidence="3">
    <location>
        <position position="774"/>
    </location>
</feature>
<feature type="modified residue" description="N6-acetyllysine; alternate" evidence="30">
    <location>
        <position position="779"/>
    </location>
</feature>
<feature type="modified residue" description="Phosphoserine" evidence="3">
    <location>
        <position position="784"/>
    </location>
</feature>
<feature type="modified residue" description="Phosphoserine; by ATM and ATR and dsDNA kinase" evidence="3">
    <location>
        <position position="824"/>
    </location>
</feature>
<feature type="cross-link" description="Glycyl lysine isopeptide (Lys-Gly) (interchain with G-Cter in SUMO2)" evidence="3">
    <location>
        <position position="35"/>
    </location>
</feature>
<feature type="cross-link" description="Glycyl lysine isopeptide (Lys-Gly) (interchain with G-Cter in SUMO2)" evidence="3">
    <location>
        <position position="128"/>
    </location>
</feature>
<feature type="cross-link" description="Glycyl lysine isopeptide (Lys-Gly) (interchain with G-Cter in SUMO2)" evidence="3">
    <location>
        <position position="200"/>
    </location>
</feature>
<feature type="cross-link" description="Glycyl lysine isopeptide (Lys-Gly) (interchain with G-Cter in SUMO2)" evidence="3">
    <location>
        <position position="255"/>
    </location>
</feature>
<feature type="cross-link" description="Glycyl lysine isopeptide (Lys-Gly) (interchain with G-Cter in SUMO2)" evidence="3">
    <location>
        <position position="262"/>
    </location>
</feature>
<feature type="cross-link" description="Glycyl lysine isopeptide (Lys-Gly) (interchain with G-Cter in SUMO2)" evidence="3">
    <location>
        <position position="273"/>
    </location>
</feature>
<feature type="cross-link" description="Glycyl lysine isopeptide (Lys-Gly) (interchain with G-Cter in SUMO2); alternate" evidence="3">
    <location>
        <position position="305"/>
    </location>
</feature>
<feature type="cross-link" description="Glycyl lysine isopeptide (Lys-Gly) (interchain with G-Cter in SUMO2)" evidence="3">
    <location>
        <position position="320"/>
    </location>
</feature>
<feature type="cross-link" description="Glycyl lysine isopeptide (Lys-Gly) (interchain with G-Cter in SUMO2)" evidence="3">
    <location>
        <position position="367"/>
    </location>
</feature>
<feature type="cross-link" description="Glycyl lysine isopeptide (Lys-Gly) (interchain with G-Cter in SUMO1); alternate" evidence="3">
    <location>
        <position position="378"/>
    </location>
</feature>
<feature type="cross-link" description="Glycyl lysine isopeptide (Lys-Gly) (interchain with G-Cter in SUMO2); alternate" evidence="3">
    <location>
        <position position="378"/>
    </location>
</feature>
<feature type="cross-link" description="Glycyl lysine isopeptide (Lys-Gly) (interchain with G-Cter in SUMO2)" evidence="3">
    <location>
        <position position="408"/>
    </location>
</feature>
<feature type="cross-link" description="Glycyl lysine isopeptide (Lys-Gly) (interchain with G-Cter in SUMO2)" evidence="3">
    <location>
        <position position="435"/>
    </location>
</feature>
<feature type="cross-link" description="Glycyl lysine isopeptide (Lys-Gly) (interchain with G-Cter in SUMO1); alternate" evidence="3">
    <location>
        <position position="469"/>
    </location>
</feature>
<feature type="cross-link" description="Glycyl lysine isopeptide (Lys-Gly) (interchain with G-Cter in SUMO2); alternate" evidence="3">
    <location>
        <position position="469"/>
    </location>
</feature>
<feature type="cross-link" description="Glycyl lysine isopeptide (Lys-Gly) (interchain with G-Cter in SUMO2)" evidence="3">
    <location>
        <position position="507"/>
    </location>
</feature>
<feature type="cross-link" description="Glycyl lysine isopeptide (Lys-Gly) (interchain with G-Cter in SUMO); alternate" evidence="3">
    <location>
        <position position="554"/>
    </location>
</feature>
<feature type="cross-link" description="Glycyl lysine isopeptide (Lys-Gly) (interchain with G-Cter in SUMO2); alternate" evidence="3">
    <location>
        <position position="554"/>
    </location>
</feature>
<feature type="cross-link" description="Glycyl lysine isopeptide (Lys-Gly) (interchain with G-Cter in SUMO2)" evidence="3">
    <location>
        <position position="575"/>
    </location>
</feature>
<feature type="cross-link" description="Glycyl lysine isopeptide (Lys-Gly) (interchain with G-Cter in SUMO)" evidence="3">
    <location>
        <position position="676"/>
    </location>
</feature>
<feature type="cross-link" description="Glycyl lysine isopeptide (Lys-Gly) (interchain with G-Cter in SUMO); alternate" evidence="3">
    <location>
        <position position="750"/>
    </location>
</feature>
<feature type="cross-link" description="Glycyl lysine isopeptide (Lys-Gly) (interchain with G-Cter in SUMO1); alternate" evidence="3">
    <location>
        <position position="750"/>
    </location>
</feature>
<feature type="cross-link" description="Glycyl lysine isopeptide (Lys-Gly) (interchain with G-Cter in SUMO2); alternate" evidence="3">
    <location>
        <position position="750"/>
    </location>
</feature>
<feature type="cross-link" description="Glycyl lysine isopeptide (Lys-Gly) (interchain with G-Cter in SUMO2); alternate" evidence="3">
    <location>
        <position position="770"/>
    </location>
</feature>
<feature type="cross-link" description="Glycyl lysine isopeptide (Lys-Gly) (interchain with G-Cter in SUMO2); alternate" evidence="3">
    <location>
        <position position="774"/>
    </location>
</feature>
<feature type="cross-link" description="Glycyl lysine isopeptide (Lys-Gly) (interchain with G-Cter in SUMO1); alternate" evidence="3">
    <location>
        <position position="779"/>
    </location>
</feature>
<feature type="cross-link" description="Glycyl lysine isopeptide (Lys-Gly) (interchain with G-Cter in SUMO2); alternate" evidence="3">
    <location>
        <position position="779"/>
    </location>
</feature>
<feature type="cross-link" description="Glycyl lysine isopeptide (Lys-Gly) (interchain with G-Cter in SUMO2)" evidence="3">
    <location>
        <position position="804"/>
    </location>
</feature>
<feature type="splice variant" id="VSP_010899" description="In isoform 2." evidence="23">
    <original>D</original>
    <variation>L</variation>
    <location>
        <position position="500"/>
    </location>
</feature>
<feature type="splice variant" id="VSP_010900" description="In isoform 2." evidence="23">
    <location>
        <begin position="501"/>
        <end position="834"/>
    </location>
</feature>
<feature type="mutagenesis site" description="In chatwo; hypomorphic mutation with reduced protein stability and impaired transcriptional corepression activity. Embryonic development arrests prior to stage E9, with pronounced convergent extention defects and defective morphogenesis of extra-embryonic tissues. The anterior-posterior axis is shortened and embryos fail to undergo gut closure. No effect on interaction with ZFP568." evidence="16">
    <original>CH</original>
    <variation>WN</variation>
    <location>
        <begin position="713"/>
        <end position="714"/>
    </location>
</feature>
<feature type="sequence conflict" description="In Ref. 2; AAB17272." evidence="23" ref="2">
    <original>A</original>
    <variation>S</variation>
    <location>
        <position position="530"/>
    </location>
</feature>
<feature type="sequence conflict" description="In Ref. 5; AAH58391." evidence="23" ref="5">
    <original>G</original>
    <variation>C</variation>
    <location>
        <position position="821"/>
    </location>
</feature>
<feature type="strand" evidence="31">
    <location>
        <begin position="155"/>
        <end position="159"/>
    </location>
</feature>
<feature type="strand" evidence="31">
    <location>
        <begin position="165"/>
        <end position="167"/>
    </location>
</feature>
<feature type="turn" evidence="31">
    <location>
        <begin position="168"/>
        <end position="171"/>
    </location>
</feature>
<feature type="strand" evidence="31">
    <location>
        <begin position="172"/>
        <end position="174"/>
    </location>
</feature>
<feature type="helix" evidence="31">
    <location>
        <begin position="176"/>
        <end position="183"/>
    </location>
</feature>
<feature type="turn" evidence="31">
    <location>
        <begin position="186"/>
        <end position="190"/>
    </location>
</feature>
<feature type="strand" evidence="31">
    <location>
        <begin position="193"/>
        <end position="195"/>
    </location>
</feature>
<keyword id="KW-0002">3D-structure</keyword>
<keyword id="KW-0007">Acetylation</keyword>
<keyword id="KW-0013">ADP-ribosylation</keyword>
<keyword id="KW-0025">Alternative splicing</keyword>
<keyword id="KW-0103">Bromodomain</keyword>
<keyword id="KW-0156">Chromatin regulator</keyword>
<keyword id="KW-0164">Citrullination</keyword>
<keyword id="KW-0175">Coiled coil</keyword>
<keyword id="KW-1017">Isopeptide bond</keyword>
<keyword id="KW-0479">Metal-binding</keyword>
<keyword id="KW-0539">Nucleus</keyword>
<keyword id="KW-0597">Phosphoprotein</keyword>
<keyword id="KW-1185">Reference proteome</keyword>
<keyword id="KW-0677">Repeat</keyword>
<keyword id="KW-0678">Repressor</keyword>
<keyword id="KW-0804">Transcription</keyword>
<keyword id="KW-0805">Transcription regulation</keyword>
<keyword id="KW-0808">Transferase</keyword>
<keyword id="KW-0832">Ubl conjugation</keyword>
<keyword id="KW-0833">Ubl conjugation pathway</keyword>
<keyword id="KW-0862">Zinc</keyword>
<keyword id="KW-0863">Zinc-finger</keyword>
<evidence type="ECO:0000250" key="1"/>
<evidence type="ECO:0000250" key="2">
    <source>
        <dbReference type="UniProtKB" id="O08629"/>
    </source>
</evidence>
<evidence type="ECO:0000250" key="3">
    <source>
        <dbReference type="UniProtKB" id="Q13263"/>
    </source>
</evidence>
<evidence type="ECO:0000255" key="4">
    <source>
        <dbReference type="PROSITE-ProRule" id="PRU00024"/>
    </source>
</evidence>
<evidence type="ECO:0000255" key="5">
    <source>
        <dbReference type="PROSITE-ProRule" id="PRU00035"/>
    </source>
</evidence>
<evidence type="ECO:0000255" key="6">
    <source>
        <dbReference type="PROSITE-ProRule" id="PRU00146"/>
    </source>
</evidence>
<evidence type="ECO:0000255" key="7">
    <source>
        <dbReference type="PROSITE-ProRule" id="PRU00175"/>
    </source>
</evidence>
<evidence type="ECO:0000256" key="8">
    <source>
        <dbReference type="SAM" id="MobiDB-lite"/>
    </source>
</evidence>
<evidence type="ECO:0000269" key="9">
    <source>
    </source>
</evidence>
<evidence type="ECO:0000269" key="10">
    <source>
    </source>
</evidence>
<evidence type="ECO:0000269" key="11">
    <source>
    </source>
</evidence>
<evidence type="ECO:0000269" key="12">
    <source>
    </source>
</evidence>
<evidence type="ECO:0000269" key="13">
    <source>
    </source>
</evidence>
<evidence type="ECO:0000269" key="14">
    <source>
    </source>
</evidence>
<evidence type="ECO:0000269" key="15">
    <source>
    </source>
</evidence>
<evidence type="ECO:0000269" key="16">
    <source>
    </source>
</evidence>
<evidence type="ECO:0000269" key="17">
    <source>
    </source>
</evidence>
<evidence type="ECO:0000269" key="18">
    <source>
    </source>
</evidence>
<evidence type="ECO:0000269" key="19">
    <source>
    </source>
</evidence>
<evidence type="ECO:0000269" key="20">
    <source>
    </source>
</evidence>
<evidence type="ECO:0000269" key="21">
    <source>
    </source>
</evidence>
<evidence type="ECO:0000269" key="22">
    <source>
    </source>
</evidence>
<evidence type="ECO:0000305" key="23"/>
<evidence type="ECO:0000312" key="24">
    <source>
        <dbReference type="MGI" id="MGI:109274"/>
    </source>
</evidence>
<evidence type="ECO:0007744" key="25">
    <source>
    </source>
</evidence>
<evidence type="ECO:0007744" key="26">
    <source>
    </source>
</evidence>
<evidence type="ECO:0007744" key="27">
    <source>
    </source>
</evidence>
<evidence type="ECO:0007744" key="28">
    <source>
    </source>
</evidence>
<evidence type="ECO:0007744" key="29">
    <source>
    </source>
</evidence>
<evidence type="ECO:0007744" key="30">
    <source>
    </source>
</evidence>
<evidence type="ECO:0007829" key="31">
    <source>
        <dbReference type="PDB" id="6O5K"/>
    </source>
</evidence>
<name>TIF1B_MOUSE</name>
<gene>
    <name evidence="24" type="primary">Trim28</name>
    <name type="synonym">Kap1</name>
    <name type="synonym">Krip1</name>
    <name type="synonym">Tif1b</name>
</gene>